<accession>P31626</accession>
<name>ENV_CAEVC</name>
<organism>
    <name type="scientific">Caprine arthritis encephalitis virus (strain Cork)</name>
    <name type="common">CAEV-Co</name>
    <dbReference type="NCBI Taxonomy" id="11661"/>
    <lineage>
        <taxon>Viruses</taxon>
        <taxon>Riboviria</taxon>
        <taxon>Pararnavirae</taxon>
        <taxon>Artverviricota</taxon>
        <taxon>Revtraviricetes</taxon>
        <taxon>Ortervirales</taxon>
        <taxon>Retroviridae</taxon>
        <taxon>Orthoretrovirinae</taxon>
        <taxon>Lentivirus</taxon>
        <taxon>Caprine arthritis encephalitis virus</taxon>
    </lineage>
</organism>
<organismHost>
    <name type="scientific">Capra hircus</name>
    <name type="common">Goat</name>
    <dbReference type="NCBI Taxonomy" id="9925"/>
</organismHost>
<reference key="1">
    <citation type="journal article" date="1991" name="J. Virol.">
        <title>Structure and genetic variability of envelope glycoproteins of two antigenic variants of caprine arthritis-encephalitis lentivirus.</title>
        <authorList>
            <person name="Knowles D.P. Jr."/>
            <person name="Cheevers W.P."/>
            <person name="McGuire T.C."/>
            <person name="Brassfield A.L."/>
            <person name="Harwood W.G."/>
            <person name="Stem T.A."/>
        </authorList>
    </citation>
    <scope>NUCLEOTIDE SEQUENCE [GENOMIC RNA]</scope>
</reference>
<reference key="2">
    <citation type="journal article" date="1990" name="Virology">
        <title>Nucleotide sequence and transcriptional analysis of molecular clones of CAEV which generate infectious virus.</title>
        <authorList>
            <person name="Saltarelli M."/>
            <person name="Querat G."/>
            <person name="Konings D.A.M."/>
            <person name="Vigne R."/>
            <person name="Clements J.E."/>
        </authorList>
    </citation>
    <scope>NUCLEOTIDE SEQUENCE [GENOMIC RNA]</scope>
</reference>
<sequence>MDAGARYMRLTGKENWVEVTMDGEKERKREGFTAGQQGKYNPQVSKNIGNRNTNDCFAYKGIFLWRISLTMWILLGINMCVSAEDYITLISDPYGFSPIKNVSGVPVTCVTKEFAKWGCQPLGAYPDPEIEYRNVSQEVVKEVYQENWPWNTYHWPLWQMENVRYWLKENMQENQQRKNNTKEGIEELLAGTIRGRFCVPYPFALLKCTKWCWYTAAINNESGKAGKIKINCTEARAVSCTEDMPLASIQRAYWDEKDRESMAFMNIKACDSNLRCQKRPGGCMEGYPIPVGAEIIPESMKYLRGAKSQYGGIKDKNGELKLPLTLRVWVKLANVSEWVNGTPPDWQDRINGSKGINGTLWGELNSMHHLGFALSQNGKWCNYTGEIKLGQETFQYHYKPNWNCTGNWTQYPVWQVIRNLDMVEHMTGECVQRPQRHNITVGNGTITGNCSTTNWDGCNCSRSGNYLYNSSEGGLLLILCRQNSTLTRILGTNTNWTTMWGIYKNCSGCENATLDNTGEGTLGGVANKNCSLPHKNESNKWTCAPRQRDGKTDSLYIAGGKKFWTRIKAQFSCESNIGQLDGMLHQQILLQKYQVIKVRAYTYGVIEMPENYAKTRIINRKKRELSHKRKKRGVGLVIMLVIMAIVAAAGASLGVANAIQQSYTKAAVQTLANATAAQQDVLEATYAMVQHVAKGVRILEARVARVEAITDRIMLYQELDCWHYHQYCITSTKTEVAKYINWTRFKDNCTWQQWERGLQGYDTNLTILLKESAAMTQLAEEQARRIPEVWESLKDVFDWSGWFSWLKYIPIIVVGLLGCILIRAVICVCQPLVEIYRTLSTPTYQRVTVIMETRADVAGENQDFGDGLEESDNSETSERVTVQKAWSRAWELWQNSPWKEPWKRGLLRLLVLPLTMGIWINGWLGEHHKNKKRKGGLETWHKKGTDIGLGQIPVDHLWCYKKSKSL</sequence>
<keyword id="KW-0165">Cleavage on pair of basic residues</keyword>
<keyword id="KW-0175">Coiled coil</keyword>
<keyword id="KW-1015">Disulfide bond</keyword>
<keyword id="KW-0325">Glycoprotein</keyword>
<keyword id="KW-1032">Host cell membrane</keyword>
<keyword id="KW-1043">Host membrane</keyword>
<keyword id="KW-0945">Host-virus interaction</keyword>
<keyword id="KW-0472">Membrane</keyword>
<keyword id="KW-1185">Reference proteome</keyword>
<keyword id="KW-0732">Signal</keyword>
<keyword id="KW-0812">Transmembrane</keyword>
<keyword id="KW-1133">Transmembrane helix</keyword>
<keyword id="KW-1161">Viral attachment to host cell</keyword>
<keyword id="KW-0261">Viral envelope protein</keyword>
<keyword id="KW-0946">Virion</keyword>
<keyword id="KW-1160">Virus entry into host cell</keyword>
<dbReference type="EMBL" id="M33677">
    <property type="protein sequence ID" value="AAA91829.1"/>
    <property type="molecule type" value="Genomic_RNA"/>
</dbReference>
<dbReference type="PIR" id="B41307">
    <property type="entry name" value="VCLJCC"/>
</dbReference>
<dbReference type="RefSeq" id="NP_040942.1">
    <property type="nucleotide sequence ID" value="NC_001463.1"/>
</dbReference>
<dbReference type="GlyCosmos" id="P31626">
    <property type="glycosylation" value="22 sites, No reported glycans"/>
</dbReference>
<dbReference type="GeneID" id="1489974"/>
<dbReference type="KEGG" id="vg:1489974"/>
<dbReference type="Proteomes" id="UP000203242">
    <property type="component" value="Segment"/>
</dbReference>
<dbReference type="GO" id="GO:0020002">
    <property type="term" value="C:host cell plasma membrane"/>
    <property type="evidence" value="ECO:0007669"/>
    <property type="project" value="UniProtKB-SubCell"/>
</dbReference>
<dbReference type="GO" id="GO:0016020">
    <property type="term" value="C:membrane"/>
    <property type="evidence" value="ECO:0007669"/>
    <property type="project" value="UniProtKB-KW"/>
</dbReference>
<dbReference type="GO" id="GO:0019031">
    <property type="term" value="C:viral envelope"/>
    <property type="evidence" value="ECO:0007669"/>
    <property type="project" value="UniProtKB-KW"/>
</dbReference>
<dbReference type="GO" id="GO:0055036">
    <property type="term" value="C:virion membrane"/>
    <property type="evidence" value="ECO:0007669"/>
    <property type="project" value="UniProtKB-SubCell"/>
</dbReference>
<dbReference type="GO" id="GO:0046718">
    <property type="term" value="P:symbiont entry into host cell"/>
    <property type="evidence" value="ECO:0007669"/>
    <property type="project" value="UniProtKB-KW"/>
</dbReference>
<dbReference type="GO" id="GO:0019062">
    <property type="term" value="P:virion attachment to host cell"/>
    <property type="evidence" value="ECO:0007669"/>
    <property type="project" value="UniProtKB-KW"/>
</dbReference>
<dbReference type="Gene3D" id="1.20.5.440">
    <property type="entry name" value="ATP synthase delta/epsilon subunit, C-terminal domain"/>
    <property type="match status" value="1"/>
</dbReference>
<dbReference type="SUPFAM" id="SSF58069">
    <property type="entry name" value="Virus ectodomain"/>
    <property type="match status" value="1"/>
</dbReference>
<comment type="function">
    <text evidence="1">The surface protein (SU) attaches the virus to the host cell by binding to its receptor. This interaction triggers the refolding of the transmembrane protein (TM) and is thought to activate its fusogenic potential by unmasking its fusion peptide. Fusion occurs at the host cell plasma membrane (By similarity).</text>
</comment>
<comment type="function">
    <text evidence="1">The transmembrane protein (TM) acts as a class I viral fusion protein. Under the current model, the protein has at least 3 conformational states: pre-fusion native state, pre-hairpin intermediate state, and post-fusion hairpin state. During viral and target cell membrane fusion, the coiled coil regions (heptad repeats) assume a trimer-of-hairpins structure, positioning the fusion peptide in close proximity to the C-terminal region of the ectodomain. The formation of this structure appears to drive apposition and subsequent fusion of viral and target cell membranes. Membranes fusion leads to delivery of the nucleocapsid into the cytoplasm (By similarity).</text>
</comment>
<comment type="subunit">
    <text evidence="1">The mature envelope protein (Env) consists of a trimer of SU-TM heterodimers attached by noncovalent interactions or by a labile interchain disulfide bond.</text>
</comment>
<comment type="subcellular location">
    <molecule>Transmembrane protein</molecule>
    <subcellularLocation>
        <location evidence="1">Virion membrane</location>
        <topology evidence="1">Single-pass type I membrane protein</topology>
    </subcellularLocation>
    <subcellularLocation>
        <location evidence="1">Host cell membrane</location>
        <topology evidence="1">Single-pass type I membrane protein</topology>
    </subcellularLocation>
    <text evidence="1">It is probably concentrated at the site of budding and incorporated into the virions possibly by contacts between the cytoplasmic tail of Env and the N-terminus of Gag.</text>
</comment>
<comment type="subcellular location">
    <molecule>Surface protein</molecule>
    <subcellularLocation>
        <location evidence="1">Virion membrane</location>
        <topology evidence="1">Peripheral membrane protein</topology>
    </subcellularLocation>
    <subcellularLocation>
        <location evidence="1">Host cell membrane</location>
        <topology evidence="1">Peripheral membrane protein</topology>
    </subcellularLocation>
    <text evidence="1">The surface protein is not anchored to the viral envelope, but associates with the extravirion surface through its binding to TM. It is probably concentrated at the site of budding and incorporated into the virions possibly by contacts between the cytoplasmic tail of Env and the N-terminus of Gag (By similarity).</text>
</comment>
<comment type="PTM">
    <text evidence="1">Specific enzymatic cleavages in vivo yield mature proteins. Envelope glycoproteins are synthesized as an inactive precursor that is N-glycosylated and processed likely by host cell furin or by a furin-like protease in the Golgi to yield the mature SU and TM proteins. The cleavage site between SU and TM requires the minimal sequence [KR]-X-[KR]-R (By similarity).</text>
</comment>
<protein>
    <recommendedName>
        <fullName>Envelope glycoprotein</fullName>
    </recommendedName>
    <alternativeName>
        <fullName>Env polyprotein</fullName>
    </alternativeName>
    <component>
        <recommendedName>
            <fullName>Surface protein</fullName>
        </recommendedName>
        <alternativeName>
            <fullName>Glycoprotein 135</fullName>
            <shortName>gp135</shortName>
        </alternativeName>
    </component>
    <component>
        <recommendedName>
            <fullName>Transmembrane protein</fullName>
        </recommendedName>
        <alternativeName>
            <fullName>Glycoprotein 38</fullName>
            <shortName>gp38</shortName>
        </alternativeName>
    </component>
</protein>
<evidence type="ECO:0000250" key="1"/>
<evidence type="ECO:0000255" key="2"/>
<evidence type="ECO:0000305" key="3"/>
<feature type="signal peptide" evidence="1">
    <location>
        <begin position="1"/>
        <end position="83"/>
    </location>
</feature>
<feature type="chain" id="PRO_0000239522" description="Envelope glycoprotein">
    <location>
        <begin position="84"/>
        <end position="966"/>
    </location>
</feature>
<feature type="chain" id="PRO_0000038688" description="Surface protein" evidence="1">
    <location>
        <begin position="84"/>
        <end position="632"/>
    </location>
</feature>
<feature type="chain" id="PRO_0000038689" description="Transmembrane protein" evidence="1">
    <location>
        <begin position="633"/>
        <end position="966"/>
    </location>
</feature>
<feature type="topological domain" description="Extracellular" evidence="2">
    <location>
        <begin position="84"/>
        <end position="801"/>
    </location>
</feature>
<feature type="transmembrane region" description="Helical" evidence="2">
    <location>
        <begin position="802"/>
        <end position="822"/>
    </location>
</feature>
<feature type="topological domain" description="Cytoplasmic" evidence="2">
    <location>
        <begin position="823"/>
        <end position="966"/>
    </location>
</feature>
<feature type="region of interest" description="Fusion peptide" evidence="2">
    <location>
        <begin position="633"/>
        <end position="653"/>
    </location>
</feature>
<feature type="region of interest" description="Immunosuppression" evidence="1">
    <location>
        <begin position="699"/>
        <end position="715"/>
    </location>
</feature>
<feature type="coiled-coil region" evidence="2">
    <location>
        <begin position="665"/>
        <end position="715"/>
    </location>
</feature>
<feature type="coiled-coil region" evidence="2">
    <location>
        <begin position="756"/>
        <end position="791"/>
    </location>
</feature>
<feature type="site" description="Cleavage; by host" evidence="1">
    <location>
        <begin position="632"/>
        <end position="633"/>
    </location>
</feature>
<feature type="glycosylation site" description="N-linked (GlcNAc...) asparagine; by host" evidence="2">
    <location>
        <position position="101"/>
    </location>
</feature>
<feature type="glycosylation site" description="N-linked (GlcNAc...) asparagine; by host" evidence="2">
    <location>
        <position position="134"/>
    </location>
</feature>
<feature type="glycosylation site" description="N-linked (GlcNAc...) asparagine; by host" evidence="2">
    <location>
        <position position="179"/>
    </location>
</feature>
<feature type="glycosylation site" description="N-linked (GlcNAc...) asparagine; by host" evidence="2">
    <location>
        <position position="220"/>
    </location>
</feature>
<feature type="glycosylation site" description="N-linked (GlcNAc...) asparagine; by host" evidence="2">
    <location>
        <position position="231"/>
    </location>
</feature>
<feature type="glycosylation site" description="N-linked (GlcNAc...) asparagine; by host" evidence="2">
    <location>
        <position position="334"/>
    </location>
</feature>
<feature type="glycosylation site" description="N-linked (GlcNAc...) asparagine; by host" evidence="2">
    <location>
        <position position="351"/>
    </location>
</feature>
<feature type="glycosylation site" description="N-linked (GlcNAc...) asparagine; by host" evidence="2">
    <location>
        <position position="357"/>
    </location>
</feature>
<feature type="glycosylation site" description="N-linked (GlcNAc...) asparagine; by host" evidence="2">
    <location>
        <position position="382"/>
    </location>
</feature>
<feature type="glycosylation site" description="N-linked (GlcNAc...) asparagine; by host" evidence="2">
    <location>
        <position position="403"/>
    </location>
</feature>
<feature type="glycosylation site" description="N-linked (GlcNAc...) asparagine; by host" evidence="2">
    <location>
        <position position="407"/>
    </location>
</feature>
<feature type="glycosylation site" description="N-linked (GlcNAc...) asparagine; by host" evidence="2">
    <location>
        <position position="438"/>
    </location>
</feature>
<feature type="glycosylation site" description="N-linked (GlcNAc...) asparagine; by host" evidence="2">
    <location>
        <position position="443"/>
    </location>
</feature>
<feature type="glycosylation site" description="N-linked (GlcNAc...) asparagine; by host" evidence="2">
    <location>
        <position position="449"/>
    </location>
</feature>
<feature type="glycosylation site" description="N-linked (GlcNAc...) asparagine; by host" evidence="2">
    <location>
        <position position="459"/>
    </location>
</feature>
<feature type="glycosylation site" description="N-linked (GlcNAc...) asparagine; by host" evidence="2">
    <location>
        <position position="469"/>
    </location>
</feature>
<feature type="glycosylation site" description="N-linked (GlcNAc...) asparagine; by host" evidence="2">
    <location>
        <position position="483"/>
    </location>
</feature>
<feature type="glycosylation site" description="N-linked (GlcNAc...) asparagine; by host" evidence="2">
    <location>
        <position position="495"/>
    </location>
</feature>
<feature type="glycosylation site" description="N-linked (GlcNAc...) asparagine; by host" evidence="2">
    <location>
        <position position="505"/>
    </location>
</feature>
<feature type="glycosylation site" description="N-linked (GlcNAc...) asparagine; by host" evidence="2">
    <location>
        <position position="511"/>
    </location>
</feature>
<feature type="glycosylation site" description="N-linked (GlcNAc...) asparagine; by host" evidence="2">
    <location>
        <position position="529"/>
    </location>
</feature>
<feature type="glycosylation site" description="N-linked (GlcNAc...) asparagine; by host" evidence="2">
    <location>
        <position position="536"/>
    </location>
</feature>
<feature type="sequence conflict" description="In Ref. 2; AAA91829." evidence="3" ref="2">
    <original>N</original>
    <variation>Q</variation>
    <location>
        <position position="41"/>
    </location>
</feature>
<feature type="sequence conflict" description="In Ref. 2; AAA91829." evidence="3" ref="2">
    <original>N</original>
    <variation>Q</variation>
    <location>
        <position position="47"/>
    </location>
</feature>
<feature type="sequence conflict" description="In Ref. 2; AAA91829." evidence="3" ref="2">
    <original>D</original>
    <variation>P</variation>
    <location>
        <position position="55"/>
    </location>
</feature>
<feature type="sequence conflict" description="In Ref. 2; AAA91829." evidence="3" ref="2">
    <original>E</original>
    <variation>Q</variation>
    <location>
        <position position="834"/>
    </location>
</feature>
<feature type="sequence conflict" description="In Ref. 2; AAA91829." evidence="3" ref="2">
    <original>GL</original>
    <variation>DC</variation>
    <location>
        <begin position="936"/>
        <end position="937"/>
    </location>
</feature>
<feature type="sequence conflict" description="In Ref. 2; AAA91829." evidence="3" ref="2">
    <original>HKKGTDIGLGQIPVDHLWCYKKSKSL</original>
    <variation>AKED</variation>
    <location>
        <begin position="941"/>
        <end position="966"/>
    </location>
</feature>
<gene>
    <name type="primary">env</name>
</gene>
<proteinExistence type="inferred from homology"/>